<accession>Q3B6Y3</accession>
<dbReference type="EMBL" id="CP000096">
    <property type="protein sequence ID" value="ABB22898.1"/>
    <property type="status" value="ALT_INIT"/>
    <property type="molecule type" value="Genomic_DNA"/>
</dbReference>
<dbReference type="RefSeq" id="WP_041463950.1">
    <property type="nucleotide sequence ID" value="NC_007512.1"/>
</dbReference>
<dbReference type="SMR" id="Q3B6Y3"/>
<dbReference type="STRING" id="319225.Plut_0006"/>
<dbReference type="KEGG" id="plt:Plut_0006"/>
<dbReference type="eggNOG" id="COG0445">
    <property type="taxonomic scope" value="Bacteria"/>
</dbReference>
<dbReference type="HOGENOM" id="CLU_007831_2_2_10"/>
<dbReference type="OrthoDB" id="9815560at2"/>
<dbReference type="Proteomes" id="UP000002709">
    <property type="component" value="Chromosome"/>
</dbReference>
<dbReference type="GO" id="GO:0005829">
    <property type="term" value="C:cytosol"/>
    <property type="evidence" value="ECO:0007669"/>
    <property type="project" value="TreeGrafter"/>
</dbReference>
<dbReference type="GO" id="GO:0050660">
    <property type="term" value="F:flavin adenine dinucleotide binding"/>
    <property type="evidence" value="ECO:0007669"/>
    <property type="project" value="UniProtKB-UniRule"/>
</dbReference>
<dbReference type="GO" id="GO:0030488">
    <property type="term" value="P:tRNA methylation"/>
    <property type="evidence" value="ECO:0007669"/>
    <property type="project" value="TreeGrafter"/>
</dbReference>
<dbReference type="GO" id="GO:0002098">
    <property type="term" value="P:tRNA wobble uridine modification"/>
    <property type="evidence" value="ECO:0007669"/>
    <property type="project" value="InterPro"/>
</dbReference>
<dbReference type="FunFam" id="1.10.150.570:FF:000001">
    <property type="entry name" value="tRNA uridine 5-carboxymethylaminomethyl modification enzyme MnmG"/>
    <property type="match status" value="1"/>
</dbReference>
<dbReference type="FunFam" id="3.50.50.60:FF:000002">
    <property type="entry name" value="tRNA uridine 5-carboxymethylaminomethyl modification enzyme MnmG"/>
    <property type="match status" value="1"/>
</dbReference>
<dbReference type="Gene3D" id="3.50.50.60">
    <property type="entry name" value="FAD/NAD(P)-binding domain"/>
    <property type="match status" value="2"/>
</dbReference>
<dbReference type="Gene3D" id="1.10.150.570">
    <property type="entry name" value="GidA associated domain, C-terminal subdomain"/>
    <property type="match status" value="1"/>
</dbReference>
<dbReference type="Gene3D" id="1.10.10.1800">
    <property type="entry name" value="tRNA uridine 5-carboxymethylaminomethyl modification enzyme MnmG/GidA"/>
    <property type="match status" value="1"/>
</dbReference>
<dbReference type="HAMAP" id="MF_00129">
    <property type="entry name" value="MnmG_GidA"/>
    <property type="match status" value="1"/>
</dbReference>
<dbReference type="InterPro" id="IPR036188">
    <property type="entry name" value="FAD/NAD-bd_sf"/>
</dbReference>
<dbReference type="InterPro" id="IPR049312">
    <property type="entry name" value="GIDA_C_N"/>
</dbReference>
<dbReference type="InterPro" id="IPR004416">
    <property type="entry name" value="MnmG"/>
</dbReference>
<dbReference type="InterPro" id="IPR002218">
    <property type="entry name" value="MnmG-rel"/>
</dbReference>
<dbReference type="InterPro" id="IPR020595">
    <property type="entry name" value="MnmG-rel_CS"/>
</dbReference>
<dbReference type="InterPro" id="IPR026904">
    <property type="entry name" value="MnmG_C"/>
</dbReference>
<dbReference type="InterPro" id="IPR047001">
    <property type="entry name" value="MnmG_C_subdom"/>
</dbReference>
<dbReference type="InterPro" id="IPR044920">
    <property type="entry name" value="MnmG_C_subdom_sf"/>
</dbReference>
<dbReference type="InterPro" id="IPR040131">
    <property type="entry name" value="MnmG_N"/>
</dbReference>
<dbReference type="NCBIfam" id="TIGR00136">
    <property type="entry name" value="mnmG_gidA"/>
    <property type="match status" value="1"/>
</dbReference>
<dbReference type="PANTHER" id="PTHR11806">
    <property type="entry name" value="GLUCOSE INHIBITED DIVISION PROTEIN A"/>
    <property type="match status" value="1"/>
</dbReference>
<dbReference type="PANTHER" id="PTHR11806:SF0">
    <property type="entry name" value="PROTEIN MTO1 HOMOLOG, MITOCHONDRIAL"/>
    <property type="match status" value="1"/>
</dbReference>
<dbReference type="Pfam" id="PF01134">
    <property type="entry name" value="GIDA"/>
    <property type="match status" value="1"/>
</dbReference>
<dbReference type="Pfam" id="PF21680">
    <property type="entry name" value="GIDA_C_1st"/>
    <property type="match status" value="1"/>
</dbReference>
<dbReference type="Pfam" id="PF13932">
    <property type="entry name" value="SAM_GIDA_C"/>
    <property type="match status" value="1"/>
</dbReference>
<dbReference type="SMART" id="SM01228">
    <property type="entry name" value="GIDA_assoc_3"/>
    <property type="match status" value="1"/>
</dbReference>
<dbReference type="SUPFAM" id="SSF51905">
    <property type="entry name" value="FAD/NAD(P)-binding domain"/>
    <property type="match status" value="1"/>
</dbReference>
<dbReference type="PROSITE" id="PS01280">
    <property type="entry name" value="GIDA_1"/>
    <property type="match status" value="1"/>
</dbReference>
<dbReference type="PROSITE" id="PS01281">
    <property type="entry name" value="GIDA_2"/>
    <property type="match status" value="1"/>
</dbReference>
<name>MNMG_CHLL3</name>
<proteinExistence type="inferred from homology"/>
<keyword id="KW-0963">Cytoplasm</keyword>
<keyword id="KW-0274">FAD</keyword>
<keyword id="KW-0285">Flavoprotein</keyword>
<keyword id="KW-0520">NAD</keyword>
<keyword id="KW-1185">Reference proteome</keyword>
<keyword id="KW-0819">tRNA processing</keyword>
<feature type="chain" id="PRO_0000345313" description="tRNA uridine 5-carboxymethylaminomethyl modification enzyme MnmG">
    <location>
        <begin position="1"/>
        <end position="621"/>
    </location>
</feature>
<feature type="region of interest" description="Disordered" evidence="2">
    <location>
        <begin position="199"/>
        <end position="227"/>
    </location>
</feature>
<feature type="compositionally biased region" description="Basic and acidic residues" evidence="2">
    <location>
        <begin position="200"/>
        <end position="218"/>
    </location>
</feature>
<feature type="binding site" evidence="1">
    <location>
        <begin position="8"/>
        <end position="13"/>
    </location>
    <ligand>
        <name>FAD</name>
        <dbReference type="ChEBI" id="CHEBI:57692"/>
    </ligand>
</feature>
<feature type="binding site" evidence="1">
    <location>
        <begin position="269"/>
        <end position="283"/>
    </location>
    <ligand>
        <name>NAD(+)</name>
        <dbReference type="ChEBI" id="CHEBI:57540"/>
    </ligand>
</feature>
<evidence type="ECO:0000255" key="1">
    <source>
        <dbReference type="HAMAP-Rule" id="MF_00129"/>
    </source>
</evidence>
<evidence type="ECO:0000256" key="2">
    <source>
        <dbReference type="SAM" id="MobiDB-lite"/>
    </source>
</evidence>
<evidence type="ECO:0000305" key="3"/>
<sequence length="621" mass="68106">MYDVIVAGAGHAGTEAALAVSRSGLSCLLVTTDLNAVARMSCNPAIGGVAKGQITREIDALGGEMAKAIDSTGIQFRMLNLSKGPAMHSPRAQADRVAYTAYMKRALEEEVNLDLLQDTVTGIEQREGILRGVRLLSGRLVTGRAAILTCGTFLNGLIHIGMDHYPGGRTIAEPPVTGLTENLILAGFEAGRLKTGTPPRIDRRSVDYSRVEEQKGDENPPPFSFSTPTLKGRAQLSCYVTHSSERTHEILKTGFDRSPLFTGKVQGIGPRYCPSIEDKIFRFPDRPGHHIFLEPEGFETNEMYVNGFSTSLPEDIQIDGLRSMKGLEEVKLIRAGYAIEYDYFPPYQIHSTLETKRIRNLYFAGQINGTSGYEEAAAQGLLAGINAAADILKRPALRLKRSDAYIGVLVDDLVTKEMKEPYRMFTSSAEHRLMLRHDNADIRLMHFGHQSGLVSDAAMERCRTKMRAIGEIKALTEKTAIPAEVLDSLISKQGQPHAASGQKISAAIKRPGMSLEILMNSLPPFREALLSISTDKEAHQQVEIDLKYEGYLKRELLTADKIARLDALQIPSEYNYSCIKGLSSEGVEKLISHRPETLGQASRISGVSPSDISVLMVHIGR</sequence>
<organism>
    <name type="scientific">Chlorobium luteolum (strain DSM 273 / BCRC 81028 / 2530)</name>
    <name type="common">Pelodictyon luteolum</name>
    <dbReference type="NCBI Taxonomy" id="319225"/>
    <lineage>
        <taxon>Bacteria</taxon>
        <taxon>Pseudomonadati</taxon>
        <taxon>Chlorobiota</taxon>
        <taxon>Chlorobiia</taxon>
        <taxon>Chlorobiales</taxon>
        <taxon>Chlorobiaceae</taxon>
        <taxon>Chlorobium/Pelodictyon group</taxon>
        <taxon>Pelodictyon</taxon>
    </lineage>
</organism>
<gene>
    <name evidence="1" type="primary">mnmG</name>
    <name evidence="1" type="synonym">gidA</name>
    <name type="ordered locus">Plut_0006</name>
</gene>
<protein>
    <recommendedName>
        <fullName evidence="1">tRNA uridine 5-carboxymethylaminomethyl modification enzyme MnmG</fullName>
    </recommendedName>
    <alternativeName>
        <fullName evidence="1">Glucose-inhibited division protein A</fullName>
    </alternativeName>
</protein>
<comment type="function">
    <text evidence="1">NAD-binding protein involved in the addition of a carboxymethylaminomethyl (cmnm) group at the wobble position (U34) of certain tRNAs, forming tRNA-cmnm(5)s(2)U34.</text>
</comment>
<comment type="cofactor">
    <cofactor evidence="1">
        <name>FAD</name>
        <dbReference type="ChEBI" id="CHEBI:57692"/>
    </cofactor>
</comment>
<comment type="subunit">
    <text evidence="1">Homodimer. Heterotetramer of two MnmE and two MnmG subunits.</text>
</comment>
<comment type="subcellular location">
    <subcellularLocation>
        <location evidence="1">Cytoplasm</location>
    </subcellularLocation>
</comment>
<comment type="similarity">
    <text evidence="1">Belongs to the MnmG family.</text>
</comment>
<comment type="sequence caution" evidence="3">
    <conflict type="erroneous initiation">
        <sequence resource="EMBL-CDS" id="ABB22898"/>
    </conflict>
</comment>
<reference key="1">
    <citation type="submission" date="2005-08" db="EMBL/GenBank/DDBJ databases">
        <title>Complete sequence of Pelodictyon luteolum DSM 273.</title>
        <authorList>
            <consortium name="US DOE Joint Genome Institute"/>
            <person name="Copeland A."/>
            <person name="Lucas S."/>
            <person name="Lapidus A."/>
            <person name="Barry K."/>
            <person name="Detter J.C."/>
            <person name="Glavina T."/>
            <person name="Hammon N."/>
            <person name="Israni S."/>
            <person name="Pitluck S."/>
            <person name="Bryant D."/>
            <person name="Schmutz J."/>
            <person name="Larimer F."/>
            <person name="Land M."/>
            <person name="Kyrpides N."/>
            <person name="Ivanova N."/>
            <person name="Richardson P."/>
        </authorList>
    </citation>
    <scope>NUCLEOTIDE SEQUENCE [LARGE SCALE GENOMIC DNA]</scope>
    <source>
        <strain>DSM 273 / BCRC 81028 / 2530</strain>
    </source>
</reference>